<accession>Q8PYQ1</accession>
<protein>
    <recommendedName>
        <fullName evidence="1">Prefoldin subunit alpha</fullName>
    </recommendedName>
    <alternativeName>
        <fullName evidence="1">GimC subunit alpha</fullName>
    </alternativeName>
</protein>
<comment type="function">
    <text evidence="1">Molecular chaperone capable of stabilizing a range of proteins. Seems to fulfill an ATP-independent, HSP70-like function in archaeal de novo protein folding.</text>
</comment>
<comment type="subunit">
    <text evidence="1">Heterohexamer of two alpha and four beta subunits.</text>
</comment>
<comment type="subcellular location">
    <subcellularLocation>
        <location evidence="1">Cytoplasm</location>
    </subcellularLocation>
</comment>
<comment type="similarity">
    <text evidence="2">Belongs to the prefoldin subunit alpha family.</text>
</comment>
<comment type="sequence caution" evidence="2">
    <conflict type="erroneous initiation">
        <sequence resource="EMBL-CDS" id="AAM30505"/>
    </conflict>
</comment>
<feature type="chain" id="PRO_0000153677" description="Prefoldin subunit alpha">
    <location>
        <begin position="1"/>
        <end position="142"/>
    </location>
</feature>
<organism>
    <name type="scientific">Methanosarcina mazei (strain ATCC BAA-159 / DSM 3647 / Goe1 / Go1 / JCM 11833 / OCM 88)</name>
    <name type="common">Methanosarcina frisia</name>
    <dbReference type="NCBI Taxonomy" id="192952"/>
    <lineage>
        <taxon>Archaea</taxon>
        <taxon>Methanobacteriati</taxon>
        <taxon>Methanobacteriota</taxon>
        <taxon>Stenosarchaea group</taxon>
        <taxon>Methanomicrobia</taxon>
        <taxon>Methanosarcinales</taxon>
        <taxon>Methanosarcinaceae</taxon>
        <taxon>Methanosarcina</taxon>
    </lineage>
</organism>
<evidence type="ECO:0000255" key="1">
    <source>
        <dbReference type="HAMAP-Rule" id="MF_00308"/>
    </source>
</evidence>
<evidence type="ECO:0000305" key="2"/>
<sequence>MAEVSEEIRNLAARHQEFQRQAEALRQEMSMVQASIASCDQAIATINELKAASEAGRAAETMVPVGFGSYVYAEVKNPDKVVVNLGAGFSAEETAEAAVETLNRRKEQLTKILEQMNASLTKIAQGMQALETEAAKIQPGQA</sequence>
<gene>
    <name evidence="1" type="primary">pfdA</name>
    <name type="ordered locus">MM_0809</name>
</gene>
<proteinExistence type="inferred from homology"/>
<keyword id="KW-0143">Chaperone</keyword>
<keyword id="KW-0963">Cytoplasm</keyword>
<name>PFDA_METMA</name>
<reference key="1">
    <citation type="journal article" date="2002" name="J. Mol. Microbiol. Biotechnol.">
        <title>The genome of Methanosarcina mazei: evidence for lateral gene transfer between Bacteria and Archaea.</title>
        <authorList>
            <person name="Deppenmeier U."/>
            <person name="Johann A."/>
            <person name="Hartsch T."/>
            <person name="Merkl R."/>
            <person name="Schmitz R.A."/>
            <person name="Martinez-Arias R."/>
            <person name="Henne A."/>
            <person name="Wiezer A."/>
            <person name="Baeumer S."/>
            <person name="Jacobi C."/>
            <person name="Brueggemann H."/>
            <person name="Lienard T."/>
            <person name="Christmann A."/>
            <person name="Boemecke M."/>
            <person name="Steckel S."/>
            <person name="Bhattacharyya A."/>
            <person name="Lykidis A."/>
            <person name="Overbeek R."/>
            <person name="Klenk H.-P."/>
            <person name="Gunsalus R.P."/>
            <person name="Fritz H.-J."/>
            <person name="Gottschalk G."/>
        </authorList>
    </citation>
    <scope>NUCLEOTIDE SEQUENCE [LARGE SCALE GENOMIC DNA]</scope>
    <source>
        <strain>ATCC BAA-159 / DSM 3647 / Goe1 / Go1 / JCM 11833 / OCM 88</strain>
    </source>
</reference>
<dbReference type="EMBL" id="AE008384">
    <property type="protein sequence ID" value="AAM30505.1"/>
    <property type="status" value="ALT_INIT"/>
    <property type="molecule type" value="Genomic_DNA"/>
</dbReference>
<dbReference type="RefSeq" id="WP_048036279.1">
    <property type="nucleotide sequence ID" value="NC_003901.1"/>
</dbReference>
<dbReference type="SMR" id="Q8PYQ1"/>
<dbReference type="GeneID" id="82159832"/>
<dbReference type="KEGG" id="mma:MM_0809"/>
<dbReference type="PATRIC" id="fig|192952.21.peg.958"/>
<dbReference type="eggNOG" id="arCOG01341">
    <property type="taxonomic scope" value="Archaea"/>
</dbReference>
<dbReference type="HOGENOM" id="CLU_091867_1_1_2"/>
<dbReference type="Proteomes" id="UP000000595">
    <property type="component" value="Chromosome"/>
</dbReference>
<dbReference type="GO" id="GO:0005737">
    <property type="term" value="C:cytoplasm"/>
    <property type="evidence" value="ECO:0007669"/>
    <property type="project" value="UniProtKB-SubCell"/>
</dbReference>
<dbReference type="GO" id="GO:0016272">
    <property type="term" value="C:prefoldin complex"/>
    <property type="evidence" value="ECO:0007669"/>
    <property type="project" value="UniProtKB-UniRule"/>
</dbReference>
<dbReference type="GO" id="GO:0051082">
    <property type="term" value="F:unfolded protein binding"/>
    <property type="evidence" value="ECO:0007669"/>
    <property type="project" value="UniProtKB-UniRule"/>
</dbReference>
<dbReference type="GO" id="GO:0006457">
    <property type="term" value="P:protein folding"/>
    <property type="evidence" value="ECO:0007669"/>
    <property type="project" value="UniProtKB-UniRule"/>
</dbReference>
<dbReference type="CDD" id="cd23160">
    <property type="entry name" value="Prefoldin_alpha_GimC"/>
    <property type="match status" value="1"/>
</dbReference>
<dbReference type="FunFam" id="1.10.287.370:FF:000027">
    <property type="entry name" value="Prefoldin subunit alpha 1"/>
    <property type="match status" value="1"/>
</dbReference>
<dbReference type="Gene3D" id="1.10.287.370">
    <property type="match status" value="1"/>
</dbReference>
<dbReference type="HAMAP" id="MF_00308">
    <property type="entry name" value="PfdA"/>
    <property type="match status" value="1"/>
</dbReference>
<dbReference type="InterPro" id="IPR011599">
    <property type="entry name" value="PFD_alpha_archaea"/>
</dbReference>
<dbReference type="InterPro" id="IPR009053">
    <property type="entry name" value="Prefoldin"/>
</dbReference>
<dbReference type="InterPro" id="IPR004127">
    <property type="entry name" value="Prefoldin_subunit_alpha"/>
</dbReference>
<dbReference type="NCBIfam" id="TIGR00293">
    <property type="entry name" value="prefoldin subunit alpha"/>
    <property type="match status" value="1"/>
</dbReference>
<dbReference type="PANTHER" id="PTHR12674">
    <property type="entry name" value="PREFOLDIN SUBUNIT 5"/>
    <property type="match status" value="1"/>
</dbReference>
<dbReference type="PANTHER" id="PTHR12674:SF4">
    <property type="entry name" value="PREFOLDIN SUBUNIT ALPHA 2"/>
    <property type="match status" value="1"/>
</dbReference>
<dbReference type="Pfam" id="PF02996">
    <property type="entry name" value="Prefoldin"/>
    <property type="match status" value="1"/>
</dbReference>
<dbReference type="SUPFAM" id="SSF46579">
    <property type="entry name" value="Prefoldin"/>
    <property type="match status" value="1"/>
</dbReference>